<proteinExistence type="inferred from homology"/>
<organism>
    <name type="scientific">Protochlamydia amoebophila (strain UWE25)</name>
    <dbReference type="NCBI Taxonomy" id="264201"/>
    <lineage>
        <taxon>Bacteria</taxon>
        <taxon>Pseudomonadati</taxon>
        <taxon>Chlamydiota</taxon>
        <taxon>Chlamydiia</taxon>
        <taxon>Parachlamydiales</taxon>
        <taxon>Parachlamydiaceae</taxon>
        <taxon>Candidatus Protochlamydia</taxon>
    </lineage>
</organism>
<sequence>MELKRPFKIFGTDGIRGRANKSPMVPEIALALGRAAGQLLSRLGKSRVVIGKDTRLSCYVFENALIAGLCSMGVDTLMVGPLPTPGVAFITRAYRADAGIVISASHNPYYDNGIKLFDSQGFKLPDSWEAEMEAMIAKNHFDEELPADDDIGKNTKIIDADGRYIEFVKATFPRKISLKNLKIVLDCANGAGYKVAPLVFKELDATVFTCGVTPNGLNINSQCGSMHPETAQKAVIDNRADVGIALDGDADRVVMIDENAQIVDGDTMLAICARDMFKQKLLKNNRVVGTVMSNLGFIKAMECLGVEVIKSQVGDRYVIQDMLKYDANLGGEQSGHVIFLDHNTTGDGLVCALQVLRIMIETDSKLSDLASFVQRYPQTCLNIKVSSKPSLDSIERLKEVIAQVEEILGNSGRVLVRYSGTENTCRVMVEGPKYKQVIQLANQIADIVQEEIGLSVS</sequence>
<feature type="chain" id="PRO_0000147928" description="Phosphoglucosamine mutase">
    <location>
        <begin position="1"/>
        <end position="457"/>
    </location>
</feature>
<feature type="active site" description="Phosphoserine intermediate" evidence="1">
    <location>
        <position position="105"/>
    </location>
</feature>
<feature type="binding site" description="via phosphate group" evidence="1">
    <location>
        <position position="105"/>
    </location>
    <ligand>
        <name>Mg(2+)</name>
        <dbReference type="ChEBI" id="CHEBI:18420"/>
    </ligand>
</feature>
<feature type="binding site" evidence="1">
    <location>
        <position position="247"/>
    </location>
    <ligand>
        <name>Mg(2+)</name>
        <dbReference type="ChEBI" id="CHEBI:18420"/>
    </ligand>
</feature>
<feature type="binding site" evidence="1">
    <location>
        <position position="249"/>
    </location>
    <ligand>
        <name>Mg(2+)</name>
        <dbReference type="ChEBI" id="CHEBI:18420"/>
    </ligand>
</feature>
<feature type="binding site" evidence="1">
    <location>
        <position position="251"/>
    </location>
    <ligand>
        <name>Mg(2+)</name>
        <dbReference type="ChEBI" id="CHEBI:18420"/>
    </ligand>
</feature>
<feature type="modified residue" description="Phosphoserine" evidence="1">
    <location>
        <position position="105"/>
    </location>
</feature>
<name>GLMM_PARUW</name>
<comment type="function">
    <text evidence="1">Catalyzes the conversion of glucosamine-6-phosphate to glucosamine-1-phosphate.</text>
</comment>
<comment type="catalytic activity">
    <reaction evidence="1">
        <text>alpha-D-glucosamine 1-phosphate = D-glucosamine 6-phosphate</text>
        <dbReference type="Rhea" id="RHEA:23424"/>
        <dbReference type="ChEBI" id="CHEBI:58516"/>
        <dbReference type="ChEBI" id="CHEBI:58725"/>
        <dbReference type="EC" id="5.4.2.10"/>
    </reaction>
</comment>
<comment type="cofactor">
    <cofactor evidence="1">
        <name>Mg(2+)</name>
        <dbReference type="ChEBI" id="CHEBI:18420"/>
    </cofactor>
    <text evidence="1">Binds 1 Mg(2+) ion per subunit.</text>
</comment>
<comment type="PTM">
    <text evidence="1">Activated by phosphorylation.</text>
</comment>
<comment type="similarity">
    <text evidence="1">Belongs to the phosphohexose mutase family.</text>
</comment>
<comment type="sequence caution" evidence="2">
    <conflict type="erroneous initiation">
        <sequence resource="EMBL-CDS" id="CAF24031"/>
    </conflict>
</comment>
<gene>
    <name evidence="1" type="primary">glmM</name>
    <name type="ordered locus">pc1307</name>
</gene>
<dbReference type="EC" id="5.4.2.10" evidence="1"/>
<dbReference type="EMBL" id="BX908798">
    <property type="protein sequence ID" value="CAF24031.1"/>
    <property type="status" value="ALT_INIT"/>
    <property type="molecule type" value="Genomic_DNA"/>
</dbReference>
<dbReference type="RefSeq" id="WP_044045495.1">
    <property type="nucleotide sequence ID" value="NC_005861.2"/>
</dbReference>
<dbReference type="SMR" id="Q6MBL8"/>
<dbReference type="STRING" id="264201.pc1307"/>
<dbReference type="eggNOG" id="COG1109">
    <property type="taxonomic scope" value="Bacteria"/>
</dbReference>
<dbReference type="HOGENOM" id="CLU_016950_7_0_0"/>
<dbReference type="OrthoDB" id="9806956at2"/>
<dbReference type="Proteomes" id="UP000000529">
    <property type="component" value="Chromosome"/>
</dbReference>
<dbReference type="GO" id="GO:0005829">
    <property type="term" value="C:cytosol"/>
    <property type="evidence" value="ECO:0007669"/>
    <property type="project" value="TreeGrafter"/>
</dbReference>
<dbReference type="GO" id="GO:0000287">
    <property type="term" value="F:magnesium ion binding"/>
    <property type="evidence" value="ECO:0007669"/>
    <property type="project" value="UniProtKB-UniRule"/>
</dbReference>
<dbReference type="GO" id="GO:0008966">
    <property type="term" value="F:phosphoglucosamine mutase activity"/>
    <property type="evidence" value="ECO:0007669"/>
    <property type="project" value="UniProtKB-UniRule"/>
</dbReference>
<dbReference type="GO" id="GO:0004615">
    <property type="term" value="F:phosphomannomutase activity"/>
    <property type="evidence" value="ECO:0007669"/>
    <property type="project" value="TreeGrafter"/>
</dbReference>
<dbReference type="GO" id="GO:0005975">
    <property type="term" value="P:carbohydrate metabolic process"/>
    <property type="evidence" value="ECO:0007669"/>
    <property type="project" value="InterPro"/>
</dbReference>
<dbReference type="GO" id="GO:0009252">
    <property type="term" value="P:peptidoglycan biosynthetic process"/>
    <property type="evidence" value="ECO:0007669"/>
    <property type="project" value="TreeGrafter"/>
</dbReference>
<dbReference type="GO" id="GO:0006048">
    <property type="term" value="P:UDP-N-acetylglucosamine biosynthetic process"/>
    <property type="evidence" value="ECO:0007669"/>
    <property type="project" value="TreeGrafter"/>
</dbReference>
<dbReference type="CDD" id="cd05802">
    <property type="entry name" value="GlmM"/>
    <property type="match status" value="1"/>
</dbReference>
<dbReference type="FunFam" id="3.30.310.50:FF:000001">
    <property type="entry name" value="Phosphoglucosamine mutase"/>
    <property type="match status" value="1"/>
</dbReference>
<dbReference type="FunFam" id="3.40.120.10:FF:000001">
    <property type="entry name" value="Phosphoglucosamine mutase"/>
    <property type="match status" value="1"/>
</dbReference>
<dbReference type="FunFam" id="3.40.120.10:FF:000002">
    <property type="entry name" value="Phosphoglucosamine mutase"/>
    <property type="match status" value="1"/>
</dbReference>
<dbReference type="Gene3D" id="3.40.120.10">
    <property type="entry name" value="Alpha-D-Glucose-1,6-Bisphosphate, subunit A, domain 3"/>
    <property type="match status" value="3"/>
</dbReference>
<dbReference type="Gene3D" id="3.30.310.50">
    <property type="entry name" value="Alpha-D-phosphohexomutase, C-terminal domain"/>
    <property type="match status" value="1"/>
</dbReference>
<dbReference type="HAMAP" id="MF_01554_B">
    <property type="entry name" value="GlmM_B"/>
    <property type="match status" value="1"/>
</dbReference>
<dbReference type="InterPro" id="IPR005844">
    <property type="entry name" value="A-D-PHexomutase_a/b/a-I"/>
</dbReference>
<dbReference type="InterPro" id="IPR016055">
    <property type="entry name" value="A-D-PHexomutase_a/b/a-I/II/III"/>
</dbReference>
<dbReference type="InterPro" id="IPR005845">
    <property type="entry name" value="A-D-PHexomutase_a/b/a-II"/>
</dbReference>
<dbReference type="InterPro" id="IPR005846">
    <property type="entry name" value="A-D-PHexomutase_a/b/a-III"/>
</dbReference>
<dbReference type="InterPro" id="IPR005843">
    <property type="entry name" value="A-D-PHexomutase_C"/>
</dbReference>
<dbReference type="InterPro" id="IPR036900">
    <property type="entry name" value="A-D-PHexomutase_C_sf"/>
</dbReference>
<dbReference type="InterPro" id="IPR016066">
    <property type="entry name" value="A-D-PHexomutase_CS"/>
</dbReference>
<dbReference type="InterPro" id="IPR005841">
    <property type="entry name" value="Alpha-D-phosphohexomutase_SF"/>
</dbReference>
<dbReference type="InterPro" id="IPR006352">
    <property type="entry name" value="GlmM_bact"/>
</dbReference>
<dbReference type="InterPro" id="IPR050060">
    <property type="entry name" value="Phosphoglucosamine_mutase"/>
</dbReference>
<dbReference type="NCBIfam" id="TIGR01455">
    <property type="entry name" value="glmM"/>
    <property type="match status" value="1"/>
</dbReference>
<dbReference type="NCBIfam" id="NF008139">
    <property type="entry name" value="PRK10887.1"/>
    <property type="match status" value="1"/>
</dbReference>
<dbReference type="PANTHER" id="PTHR42946:SF1">
    <property type="entry name" value="PHOSPHOGLUCOMUTASE (ALPHA-D-GLUCOSE-1,6-BISPHOSPHATE-DEPENDENT)"/>
    <property type="match status" value="1"/>
</dbReference>
<dbReference type="PANTHER" id="PTHR42946">
    <property type="entry name" value="PHOSPHOHEXOSE MUTASE"/>
    <property type="match status" value="1"/>
</dbReference>
<dbReference type="Pfam" id="PF02878">
    <property type="entry name" value="PGM_PMM_I"/>
    <property type="match status" value="1"/>
</dbReference>
<dbReference type="Pfam" id="PF02879">
    <property type="entry name" value="PGM_PMM_II"/>
    <property type="match status" value="1"/>
</dbReference>
<dbReference type="Pfam" id="PF02880">
    <property type="entry name" value="PGM_PMM_III"/>
    <property type="match status" value="1"/>
</dbReference>
<dbReference type="Pfam" id="PF00408">
    <property type="entry name" value="PGM_PMM_IV"/>
    <property type="match status" value="1"/>
</dbReference>
<dbReference type="PRINTS" id="PR00509">
    <property type="entry name" value="PGMPMM"/>
</dbReference>
<dbReference type="SUPFAM" id="SSF55957">
    <property type="entry name" value="Phosphoglucomutase, C-terminal domain"/>
    <property type="match status" value="1"/>
</dbReference>
<dbReference type="SUPFAM" id="SSF53738">
    <property type="entry name" value="Phosphoglucomutase, first 3 domains"/>
    <property type="match status" value="3"/>
</dbReference>
<dbReference type="PROSITE" id="PS00710">
    <property type="entry name" value="PGM_PMM"/>
    <property type="match status" value="1"/>
</dbReference>
<evidence type="ECO:0000255" key="1">
    <source>
        <dbReference type="HAMAP-Rule" id="MF_01554"/>
    </source>
</evidence>
<evidence type="ECO:0000305" key="2"/>
<protein>
    <recommendedName>
        <fullName evidence="1">Phosphoglucosamine mutase</fullName>
        <ecNumber evidence="1">5.4.2.10</ecNumber>
    </recommendedName>
</protein>
<reference key="1">
    <citation type="journal article" date="2004" name="Science">
        <title>Illuminating the evolutionary history of chlamydiae.</title>
        <authorList>
            <person name="Horn M."/>
            <person name="Collingro A."/>
            <person name="Schmitz-Esser S."/>
            <person name="Beier C.L."/>
            <person name="Purkhold U."/>
            <person name="Fartmann B."/>
            <person name="Brandt P."/>
            <person name="Nyakatura G.J."/>
            <person name="Droege M."/>
            <person name="Frishman D."/>
            <person name="Rattei T."/>
            <person name="Mewes H.-W."/>
            <person name="Wagner M."/>
        </authorList>
    </citation>
    <scope>NUCLEOTIDE SEQUENCE [LARGE SCALE GENOMIC DNA]</scope>
    <source>
        <strain>UWE25</strain>
    </source>
</reference>
<accession>Q6MBL8</accession>
<keyword id="KW-0413">Isomerase</keyword>
<keyword id="KW-0460">Magnesium</keyword>
<keyword id="KW-0479">Metal-binding</keyword>
<keyword id="KW-0597">Phosphoprotein</keyword>
<keyword id="KW-1185">Reference proteome</keyword>